<accession>Q6FCP9</accession>
<gene>
    <name evidence="1" type="primary">astB</name>
    <name type="ordered locus">ACIAD1288</name>
</gene>
<protein>
    <recommendedName>
        <fullName evidence="1">N-succinylarginine dihydrolase</fullName>
        <ecNumber evidence="1">3.5.3.23</ecNumber>
    </recommendedName>
</protein>
<keyword id="KW-0056">Arginine metabolism</keyword>
<keyword id="KW-0378">Hydrolase</keyword>
<dbReference type="EC" id="3.5.3.23" evidence="1"/>
<dbReference type="EMBL" id="CR543861">
    <property type="protein sequence ID" value="CAG68160.1"/>
    <property type="molecule type" value="Genomic_DNA"/>
</dbReference>
<dbReference type="RefSeq" id="WP_004925865.1">
    <property type="nucleotide sequence ID" value="NC_005966.1"/>
</dbReference>
<dbReference type="SMR" id="Q6FCP9"/>
<dbReference type="STRING" id="202950.GCA_001485005_01048"/>
<dbReference type="GeneID" id="45233706"/>
<dbReference type="KEGG" id="aci:ACIAD1288"/>
<dbReference type="eggNOG" id="COG3724">
    <property type="taxonomic scope" value="Bacteria"/>
</dbReference>
<dbReference type="HOGENOM" id="CLU_053835_0_0_6"/>
<dbReference type="OrthoDB" id="248552at2"/>
<dbReference type="BioCyc" id="ASP62977:ACIAD_RS05920-MONOMER"/>
<dbReference type="UniPathway" id="UPA00185">
    <property type="reaction ID" value="UER00280"/>
</dbReference>
<dbReference type="Proteomes" id="UP000000430">
    <property type="component" value="Chromosome"/>
</dbReference>
<dbReference type="GO" id="GO:0009015">
    <property type="term" value="F:N-succinylarginine dihydrolase activity"/>
    <property type="evidence" value="ECO:0007669"/>
    <property type="project" value="UniProtKB-UniRule"/>
</dbReference>
<dbReference type="GO" id="GO:0019544">
    <property type="term" value="P:arginine catabolic process to glutamate"/>
    <property type="evidence" value="ECO:0007669"/>
    <property type="project" value="UniProtKB-UniRule"/>
</dbReference>
<dbReference type="GO" id="GO:0019545">
    <property type="term" value="P:arginine catabolic process to succinate"/>
    <property type="evidence" value="ECO:0007669"/>
    <property type="project" value="UniProtKB-UniRule"/>
</dbReference>
<dbReference type="Gene3D" id="3.75.10.20">
    <property type="entry name" value="Succinylarginine dihydrolase"/>
    <property type="match status" value="1"/>
</dbReference>
<dbReference type="HAMAP" id="MF_01172">
    <property type="entry name" value="AstB"/>
    <property type="match status" value="1"/>
</dbReference>
<dbReference type="InterPro" id="IPR037031">
    <property type="entry name" value="AstB_sf"/>
</dbReference>
<dbReference type="InterPro" id="IPR007079">
    <property type="entry name" value="SuccinylArg_d-Hdrlase_AstB"/>
</dbReference>
<dbReference type="NCBIfam" id="TIGR03241">
    <property type="entry name" value="arg_catab_astB"/>
    <property type="match status" value="1"/>
</dbReference>
<dbReference type="NCBIfam" id="NF009789">
    <property type="entry name" value="PRK13281.1"/>
    <property type="match status" value="1"/>
</dbReference>
<dbReference type="PANTHER" id="PTHR30420">
    <property type="entry name" value="N-SUCCINYLARGININE DIHYDROLASE"/>
    <property type="match status" value="1"/>
</dbReference>
<dbReference type="PANTHER" id="PTHR30420:SF2">
    <property type="entry name" value="N-SUCCINYLARGININE DIHYDROLASE"/>
    <property type="match status" value="1"/>
</dbReference>
<dbReference type="Pfam" id="PF04996">
    <property type="entry name" value="AstB"/>
    <property type="match status" value="1"/>
</dbReference>
<dbReference type="SUPFAM" id="SSF55909">
    <property type="entry name" value="Pentein"/>
    <property type="match status" value="1"/>
</dbReference>
<comment type="function">
    <text evidence="1">Catalyzes the hydrolysis of N(2)-succinylarginine into N(2)-succinylornithine, ammonia and CO(2).</text>
</comment>
<comment type="catalytic activity">
    <reaction evidence="1">
        <text>N(2)-succinyl-L-arginine + 2 H2O + 2 H(+) = N(2)-succinyl-L-ornithine + 2 NH4(+) + CO2</text>
        <dbReference type="Rhea" id="RHEA:19533"/>
        <dbReference type="ChEBI" id="CHEBI:15377"/>
        <dbReference type="ChEBI" id="CHEBI:15378"/>
        <dbReference type="ChEBI" id="CHEBI:16526"/>
        <dbReference type="ChEBI" id="CHEBI:28938"/>
        <dbReference type="ChEBI" id="CHEBI:58241"/>
        <dbReference type="ChEBI" id="CHEBI:58514"/>
        <dbReference type="EC" id="3.5.3.23"/>
    </reaction>
</comment>
<comment type="pathway">
    <text evidence="1">Amino-acid degradation; L-arginine degradation via AST pathway; L-glutamate and succinate from L-arginine: step 2/5.</text>
</comment>
<comment type="subunit">
    <text evidence="1">Homodimer.</text>
</comment>
<comment type="similarity">
    <text evidence="1">Belongs to the succinylarginine dihydrolase family.</text>
</comment>
<reference key="1">
    <citation type="journal article" date="2004" name="Nucleic Acids Res.">
        <title>Unique features revealed by the genome sequence of Acinetobacter sp. ADP1, a versatile and naturally transformation competent bacterium.</title>
        <authorList>
            <person name="Barbe V."/>
            <person name="Vallenet D."/>
            <person name="Fonknechten N."/>
            <person name="Kreimeyer A."/>
            <person name="Oztas S."/>
            <person name="Labarre L."/>
            <person name="Cruveiller S."/>
            <person name="Robert C."/>
            <person name="Duprat S."/>
            <person name="Wincker P."/>
            <person name="Ornston L.N."/>
            <person name="Weissenbach J."/>
            <person name="Marliere P."/>
            <person name="Cohen G.N."/>
            <person name="Medigue C."/>
        </authorList>
    </citation>
    <scope>NUCLEOTIDE SEQUENCE [LARGE SCALE GENOMIC DNA]</scope>
    <source>
        <strain>ATCC 33305 / BD413 / ADP1</strain>
    </source>
</reference>
<organism>
    <name type="scientific">Acinetobacter baylyi (strain ATCC 33305 / BD413 / ADP1)</name>
    <dbReference type="NCBI Taxonomy" id="62977"/>
    <lineage>
        <taxon>Bacteria</taxon>
        <taxon>Pseudomonadati</taxon>
        <taxon>Pseudomonadota</taxon>
        <taxon>Gammaproteobacteria</taxon>
        <taxon>Moraxellales</taxon>
        <taxon>Moraxellaceae</taxon>
        <taxon>Acinetobacter</taxon>
    </lineage>
</organism>
<feature type="chain" id="PRO_0000262337" description="N-succinylarginine dihydrolase">
    <location>
        <begin position="1"/>
        <end position="446"/>
    </location>
</feature>
<feature type="active site" evidence="1">
    <location>
        <position position="174"/>
    </location>
</feature>
<feature type="active site" evidence="1">
    <location>
        <position position="249"/>
    </location>
</feature>
<feature type="active site" description="Nucleophile" evidence="1">
    <location>
        <position position="370"/>
    </location>
</feature>
<feature type="binding site" evidence="1">
    <location>
        <begin position="19"/>
        <end position="28"/>
    </location>
    <ligand>
        <name>substrate</name>
    </ligand>
</feature>
<feature type="binding site" evidence="1">
    <location>
        <position position="110"/>
    </location>
    <ligand>
        <name>substrate</name>
    </ligand>
</feature>
<feature type="binding site" evidence="1">
    <location>
        <begin position="137"/>
        <end position="138"/>
    </location>
    <ligand>
        <name>substrate</name>
    </ligand>
</feature>
<feature type="binding site" evidence="1">
    <location>
        <position position="213"/>
    </location>
    <ligand>
        <name>substrate</name>
    </ligand>
</feature>
<feature type="binding site" evidence="1">
    <location>
        <position position="251"/>
    </location>
    <ligand>
        <name>substrate</name>
    </ligand>
</feature>
<feature type="binding site" evidence="1">
    <location>
        <position position="364"/>
    </location>
    <ligand>
        <name>substrate</name>
    </ligand>
</feature>
<evidence type="ECO:0000255" key="1">
    <source>
        <dbReference type="HAMAP-Rule" id="MF_01172"/>
    </source>
</evidence>
<proteinExistence type="inferred from homology"/>
<sequence length="446" mass="49301">MSGYEINFDGLVGPTHHYAGLSFGNEASTKNRNHLSNPKLAAKQGLLKMKALADMGMKQGVLAPQERPHVPSLRKLGFGGDDHAVITQAMRTSPELLSALSSASCMWTANAATVSPSADSADGRVHFTAANLNNKFHRSIEHETTSQILAAIFRDERYFAHHLALPPVALFGDEGAANHNRLGGPYDSAAVQVFVYGQQFLGGQVAPKRYPARQSLEACQAVARLHQLDSNRTVFVQQNPDVIDEGVFHNDVIAVSNQQVLFHHQKAFFNQAQALNEIREKMALLEQDLIAIEVPDQRVSVGDAVSTYLFNSQLITRPDGGMTIVVPEESRQNLAVWSYLNDMIQMGTPVDQIKVFDLRESMRNGGGPACLRLRVAVNDAEFNAINHNVLMNDALFARLNTWVDRRYRDQLSHQDLADPALLIESRSALDELTQILNLGSVYHFQQ</sequence>
<name>ASTB_ACIAD</name>